<accession>Q65II8</accession>
<accession>Q62TZ0</accession>
<proteinExistence type="inferred from homology"/>
<name>AZOR1_BACLD</name>
<protein>
    <recommendedName>
        <fullName evidence="1">FMN-dependent NADH:quinone oxidoreductase 1</fullName>
        <ecNumber evidence="1">1.6.5.-</ecNumber>
    </recommendedName>
    <alternativeName>
        <fullName evidence="1">Azo-dye reductase 1</fullName>
    </alternativeName>
    <alternativeName>
        <fullName evidence="1">FMN-dependent NADH-azo compound oxidoreductase 1</fullName>
    </alternativeName>
    <alternativeName>
        <fullName evidence="1">FMN-dependent NADH-azoreductase 1</fullName>
        <ecNumber evidence="1">1.7.1.17</ecNumber>
    </alternativeName>
</protein>
<gene>
    <name evidence="1" type="primary">azoR1</name>
    <name type="ordered locus">BLi02245</name>
    <name type="ordered locus">BL01874</name>
</gene>
<evidence type="ECO:0000255" key="1">
    <source>
        <dbReference type="HAMAP-Rule" id="MF_01216"/>
    </source>
</evidence>
<sequence length="208" mass="22986">MSKVLFVKANDRTAEEAVSVKLYEAFLNSYKENHPNDEIVELDLYRENPPYLGRNAINGTFKAGKGMELNEDEKAAAAVADRYLDEFVKADKVVFAFPLWNFAVPAVLHTYVDYLSRAGVTFTYTPEGPKGLMGDKKVALLNARGGFYSEGPMAAMEMSLNYMKTVMGFFGVQDLHTVVIEGHNAVPDDAQKIIENGLAEAKKLAASF</sequence>
<feature type="chain" id="PRO_0000245889" description="FMN-dependent NADH:quinone oxidoreductase 1">
    <location>
        <begin position="1"/>
        <end position="208"/>
    </location>
</feature>
<organism>
    <name type="scientific">Bacillus licheniformis (strain ATCC 14580 / DSM 13 / JCM 2505 / CCUG 7422 / NBRC 12200 / NCIMB 9375 / NCTC 10341 / NRRL NRS-1264 / Gibson 46)</name>
    <dbReference type="NCBI Taxonomy" id="279010"/>
    <lineage>
        <taxon>Bacteria</taxon>
        <taxon>Bacillati</taxon>
        <taxon>Bacillota</taxon>
        <taxon>Bacilli</taxon>
        <taxon>Bacillales</taxon>
        <taxon>Bacillaceae</taxon>
        <taxon>Bacillus</taxon>
    </lineage>
</organism>
<reference key="1">
    <citation type="journal article" date="2004" name="J. Mol. Microbiol. Biotechnol.">
        <title>The complete genome sequence of Bacillus licheniformis DSM13, an organism with great industrial potential.</title>
        <authorList>
            <person name="Veith B."/>
            <person name="Herzberg C."/>
            <person name="Steckel S."/>
            <person name="Feesche J."/>
            <person name="Maurer K.H."/>
            <person name="Ehrenreich P."/>
            <person name="Baeumer S."/>
            <person name="Henne A."/>
            <person name="Liesegang H."/>
            <person name="Merkl R."/>
            <person name="Ehrenreich A."/>
            <person name="Gottschalk G."/>
        </authorList>
    </citation>
    <scope>NUCLEOTIDE SEQUENCE [LARGE SCALE GENOMIC DNA]</scope>
    <source>
        <strain>ATCC 14580 / DSM 13 / JCM 2505 / CCUG 7422 / NBRC 12200 / NCIMB 9375 / NCTC 10341 / NRRL NRS-1264 / Gibson 46</strain>
    </source>
</reference>
<reference key="2">
    <citation type="journal article" date="2004" name="Genome Biol.">
        <title>Complete genome sequence of the industrial bacterium Bacillus licheniformis and comparisons with closely related Bacillus species.</title>
        <authorList>
            <person name="Rey M.W."/>
            <person name="Ramaiya P."/>
            <person name="Nelson B.A."/>
            <person name="Brody-Karpin S.D."/>
            <person name="Zaretsky E.J."/>
            <person name="Tang M."/>
            <person name="Lopez de Leon A."/>
            <person name="Xiang H."/>
            <person name="Gusti V."/>
            <person name="Clausen I.G."/>
            <person name="Olsen P.B."/>
            <person name="Rasmussen M.D."/>
            <person name="Andersen J.T."/>
            <person name="Joergensen P.L."/>
            <person name="Larsen T.S."/>
            <person name="Sorokin A."/>
            <person name="Bolotin A."/>
            <person name="Lapidus A."/>
            <person name="Galleron N."/>
            <person name="Ehrlich S.D."/>
            <person name="Berka R.M."/>
        </authorList>
    </citation>
    <scope>NUCLEOTIDE SEQUENCE [LARGE SCALE GENOMIC DNA]</scope>
    <source>
        <strain>ATCC 14580 / DSM 13 / JCM 2505 / CCUG 7422 / NBRC 12200 / NCIMB 9375 / NCTC 10341 / NRRL NRS-1264 / Gibson 46</strain>
    </source>
</reference>
<comment type="function">
    <text evidence="1">Quinone reductase that provides resistance to thiol-specific stress caused by electrophilic quinones.</text>
</comment>
<comment type="function">
    <text evidence="1">Also exhibits azoreductase activity. Catalyzes the reductive cleavage of the azo bond in aromatic azo compounds to the corresponding amines.</text>
</comment>
<comment type="catalytic activity">
    <reaction evidence="1">
        <text>2 a quinone + NADH + H(+) = 2 a 1,4-benzosemiquinone + NAD(+)</text>
        <dbReference type="Rhea" id="RHEA:65952"/>
        <dbReference type="ChEBI" id="CHEBI:15378"/>
        <dbReference type="ChEBI" id="CHEBI:57540"/>
        <dbReference type="ChEBI" id="CHEBI:57945"/>
        <dbReference type="ChEBI" id="CHEBI:132124"/>
        <dbReference type="ChEBI" id="CHEBI:134225"/>
    </reaction>
</comment>
<comment type="catalytic activity">
    <reaction evidence="1">
        <text>N,N-dimethyl-1,4-phenylenediamine + anthranilate + 2 NAD(+) = 2-(4-dimethylaminophenyl)diazenylbenzoate + 2 NADH + 2 H(+)</text>
        <dbReference type="Rhea" id="RHEA:55872"/>
        <dbReference type="ChEBI" id="CHEBI:15378"/>
        <dbReference type="ChEBI" id="CHEBI:15783"/>
        <dbReference type="ChEBI" id="CHEBI:16567"/>
        <dbReference type="ChEBI" id="CHEBI:57540"/>
        <dbReference type="ChEBI" id="CHEBI:57945"/>
        <dbReference type="ChEBI" id="CHEBI:71579"/>
        <dbReference type="EC" id="1.7.1.17"/>
    </reaction>
</comment>
<comment type="cofactor">
    <cofactor evidence="1">
        <name>FMN</name>
        <dbReference type="ChEBI" id="CHEBI:58210"/>
    </cofactor>
    <text evidence="1">Binds 1 FMN per subunit.</text>
</comment>
<comment type="subunit">
    <text evidence="1">Homodimer.</text>
</comment>
<comment type="similarity">
    <text evidence="1">Belongs to the azoreductase type 1 family.</text>
</comment>
<keyword id="KW-0285">Flavoprotein</keyword>
<keyword id="KW-0288">FMN</keyword>
<keyword id="KW-0520">NAD</keyword>
<keyword id="KW-0560">Oxidoreductase</keyword>
<keyword id="KW-1185">Reference proteome</keyword>
<dbReference type="EC" id="1.6.5.-" evidence="1"/>
<dbReference type="EC" id="1.7.1.17" evidence="1"/>
<dbReference type="EMBL" id="AE017333">
    <property type="protein sequence ID" value="AAU41126.1"/>
    <property type="molecule type" value="Genomic_DNA"/>
</dbReference>
<dbReference type="EMBL" id="CP000002">
    <property type="protein sequence ID" value="AAU23769.1"/>
    <property type="molecule type" value="Genomic_DNA"/>
</dbReference>
<dbReference type="RefSeq" id="WP_009328062.1">
    <property type="nucleotide sequence ID" value="NC_006322.1"/>
</dbReference>
<dbReference type="SMR" id="Q65II8"/>
<dbReference type="KEGG" id="bld:BLi02245"/>
<dbReference type="KEGG" id="bli:BL01874"/>
<dbReference type="eggNOG" id="COG1182">
    <property type="taxonomic scope" value="Bacteria"/>
</dbReference>
<dbReference type="HOGENOM" id="CLU_088964_3_1_9"/>
<dbReference type="Proteomes" id="UP000000606">
    <property type="component" value="Chromosome"/>
</dbReference>
<dbReference type="GO" id="GO:0009055">
    <property type="term" value="F:electron transfer activity"/>
    <property type="evidence" value="ECO:0007669"/>
    <property type="project" value="UniProtKB-UniRule"/>
</dbReference>
<dbReference type="GO" id="GO:0010181">
    <property type="term" value="F:FMN binding"/>
    <property type="evidence" value="ECO:0007669"/>
    <property type="project" value="UniProtKB-UniRule"/>
</dbReference>
<dbReference type="GO" id="GO:0016652">
    <property type="term" value="F:oxidoreductase activity, acting on NAD(P)H as acceptor"/>
    <property type="evidence" value="ECO:0007669"/>
    <property type="project" value="UniProtKB-UniRule"/>
</dbReference>
<dbReference type="GO" id="GO:0016655">
    <property type="term" value="F:oxidoreductase activity, acting on NAD(P)H, quinone or similar compound as acceptor"/>
    <property type="evidence" value="ECO:0007669"/>
    <property type="project" value="InterPro"/>
</dbReference>
<dbReference type="Gene3D" id="3.40.50.360">
    <property type="match status" value="1"/>
</dbReference>
<dbReference type="HAMAP" id="MF_01216">
    <property type="entry name" value="Azoreductase_type1"/>
    <property type="match status" value="1"/>
</dbReference>
<dbReference type="InterPro" id="IPR003680">
    <property type="entry name" value="Flavodoxin_fold"/>
</dbReference>
<dbReference type="InterPro" id="IPR029039">
    <property type="entry name" value="Flavoprotein-like_sf"/>
</dbReference>
<dbReference type="InterPro" id="IPR050104">
    <property type="entry name" value="FMN-dep_NADH:Q_OxRdtase_AzoR1"/>
</dbReference>
<dbReference type="InterPro" id="IPR023048">
    <property type="entry name" value="NADH:quinone_OxRdtase_FMN_depd"/>
</dbReference>
<dbReference type="NCBIfam" id="NF010075">
    <property type="entry name" value="PRK13556.1"/>
    <property type="match status" value="1"/>
</dbReference>
<dbReference type="PANTHER" id="PTHR43741">
    <property type="entry name" value="FMN-DEPENDENT NADH-AZOREDUCTASE 1"/>
    <property type="match status" value="1"/>
</dbReference>
<dbReference type="PANTHER" id="PTHR43741:SF4">
    <property type="entry name" value="FMN-DEPENDENT NADH:QUINONE OXIDOREDUCTASE"/>
    <property type="match status" value="1"/>
</dbReference>
<dbReference type="Pfam" id="PF02525">
    <property type="entry name" value="Flavodoxin_2"/>
    <property type="match status" value="1"/>
</dbReference>
<dbReference type="SUPFAM" id="SSF52218">
    <property type="entry name" value="Flavoproteins"/>
    <property type="match status" value="1"/>
</dbReference>